<accession>B1HMV7</accession>
<organism>
    <name type="scientific">Lysinibacillus sphaericus (strain C3-41)</name>
    <dbReference type="NCBI Taxonomy" id="444177"/>
    <lineage>
        <taxon>Bacteria</taxon>
        <taxon>Bacillati</taxon>
        <taxon>Bacillota</taxon>
        <taxon>Bacilli</taxon>
        <taxon>Bacillales</taxon>
        <taxon>Bacillaceae</taxon>
        <taxon>Lysinibacillus</taxon>
    </lineage>
</organism>
<comment type="function">
    <text evidence="1">Located at the top of the head of the 30S subunit, it contacts several helices of the 16S rRNA. In the 70S ribosome it contacts the 23S rRNA (bridge B1a) and protein L5 of the 50S subunit (bridge B1b), connecting the 2 subunits; these bridges are implicated in subunit movement. Contacts the tRNAs in the A and P-sites.</text>
</comment>
<comment type="subunit">
    <text evidence="1">Part of the 30S ribosomal subunit. Forms a loose heterodimer with protein S19. Forms two bridges to the 50S subunit in the 70S ribosome.</text>
</comment>
<comment type="similarity">
    <text evidence="1">Belongs to the universal ribosomal protein uS13 family.</text>
</comment>
<gene>
    <name evidence="1" type="primary">rpsM</name>
    <name type="ordered locus">Bsph_4591</name>
</gene>
<proteinExistence type="inferred from homology"/>
<reference key="1">
    <citation type="journal article" date="2008" name="J. Bacteriol.">
        <title>Complete genome sequence of the mosquitocidal bacterium Bacillus sphaericus C3-41 and comparison with those of closely related Bacillus species.</title>
        <authorList>
            <person name="Hu X."/>
            <person name="Fan W."/>
            <person name="Han B."/>
            <person name="Liu H."/>
            <person name="Zheng D."/>
            <person name="Li Q."/>
            <person name="Dong W."/>
            <person name="Yan J."/>
            <person name="Gao M."/>
            <person name="Berry C."/>
            <person name="Yuan Z."/>
        </authorList>
    </citation>
    <scope>NUCLEOTIDE SEQUENCE [LARGE SCALE GENOMIC DNA]</scope>
    <source>
        <strain>C3-41</strain>
    </source>
</reference>
<protein>
    <recommendedName>
        <fullName evidence="1">Small ribosomal subunit protein uS13</fullName>
    </recommendedName>
    <alternativeName>
        <fullName evidence="3">30S ribosomal protein S13</fullName>
    </alternativeName>
</protein>
<dbReference type="EMBL" id="CP000817">
    <property type="protein sequence ID" value="ACA42035.1"/>
    <property type="molecule type" value="Genomic_DNA"/>
</dbReference>
<dbReference type="RefSeq" id="WP_004233729.1">
    <property type="nucleotide sequence ID" value="NC_010382.1"/>
</dbReference>
<dbReference type="SMR" id="B1HMV7"/>
<dbReference type="EnsemblBacteria" id="ACA42035">
    <property type="protein sequence ID" value="ACA42035"/>
    <property type="gene ID" value="Bsph_4591"/>
</dbReference>
<dbReference type="GeneID" id="74907540"/>
<dbReference type="KEGG" id="lsp:Bsph_4591"/>
<dbReference type="HOGENOM" id="CLU_103849_1_1_9"/>
<dbReference type="Proteomes" id="UP000002164">
    <property type="component" value="Chromosome"/>
</dbReference>
<dbReference type="GO" id="GO:0005829">
    <property type="term" value="C:cytosol"/>
    <property type="evidence" value="ECO:0007669"/>
    <property type="project" value="TreeGrafter"/>
</dbReference>
<dbReference type="GO" id="GO:0015935">
    <property type="term" value="C:small ribosomal subunit"/>
    <property type="evidence" value="ECO:0007669"/>
    <property type="project" value="TreeGrafter"/>
</dbReference>
<dbReference type="GO" id="GO:0019843">
    <property type="term" value="F:rRNA binding"/>
    <property type="evidence" value="ECO:0007669"/>
    <property type="project" value="UniProtKB-UniRule"/>
</dbReference>
<dbReference type="GO" id="GO:0003735">
    <property type="term" value="F:structural constituent of ribosome"/>
    <property type="evidence" value="ECO:0007669"/>
    <property type="project" value="InterPro"/>
</dbReference>
<dbReference type="GO" id="GO:0000049">
    <property type="term" value="F:tRNA binding"/>
    <property type="evidence" value="ECO:0007669"/>
    <property type="project" value="UniProtKB-UniRule"/>
</dbReference>
<dbReference type="GO" id="GO:0006412">
    <property type="term" value="P:translation"/>
    <property type="evidence" value="ECO:0007669"/>
    <property type="project" value="UniProtKB-UniRule"/>
</dbReference>
<dbReference type="FunFam" id="1.10.8.50:FF:000001">
    <property type="entry name" value="30S ribosomal protein S13"/>
    <property type="match status" value="1"/>
</dbReference>
<dbReference type="FunFam" id="4.10.910.10:FF:000001">
    <property type="entry name" value="30S ribosomal protein S13"/>
    <property type="match status" value="1"/>
</dbReference>
<dbReference type="Gene3D" id="1.10.8.50">
    <property type="match status" value="1"/>
</dbReference>
<dbReference type="Gene3D" id="4.10.910.10">
    <property type="entry name" value="30s ribosomal protein s13, domain 2"/>
    <property type="match status" value="1"/>
</dbReference>
<dbReference type="HAMAP" id="MF_01315">
    <property type="entry name" value="Ribosomal_uS13"/>
    <property type="match status" value="1"/>
</dbReference>
<dbReference type="InterPro" id="IPR027437">
    <property type="entry name" value="Rbsml_uS13_C"/>
</dbReference>
<dbReference type="InterPro" id="IPR001892">
    <property type="entry name" value="Ribosomal_uS13"/>
</dbReference>
<dbReference type="InterPro" id="IPR010979">
    <property type="entry name" value="Ribosomal_uS13-like_H2TH"/>
</dbReference>
<dbReference type="InterPro" id="IPR019980">
    <property type="entry name" value="Ribosomal_uS13_bac-type"/>
</dbReference>
<dbReference type="InterPro" id="IPR018269">
    <property type="entry name" value="Ribosomal_uS13_CS"/>
</dbReference>
<dbReference type="NCBIfam" id="TIGR03631">
    <property type="entry name" value="uS13_bact"/>
    <property type="match status" value="1"/>
</dbReference>
<dbReference type="PANTHER" id="PTHR10871">
    <property type="entry name" value="30S RIBOSOMAL PROTEIN S13/40S RIBOSOMAL PROTEIN S18"/>
    <property type="match status" value="1"/>
</dbReference>
<dbReference type="PANTHER" id="PTHR10871:SF1">
    <property type="entry name" value="SMALL RIBOSOMAL SUBUNIT PROTEIN US13M"/>
    <property type="match status" value="1"/>
</dbReference>
<dbReference type="Pfam" id="PF00416">
    <property type="entry name" value="Ribosomal_S13"/>
    <property type="match status" value="1"/>
</dbReference>
<dbReference type="PIRSF" id="PIRSF002134">
    <property type="entry name" value="Ribosomal_S13"/>
    <property type="match status" value="1"/>
</dbReference>
<dbReference type="SUPFAM" id="SSF46946">
    <property type="entry name" value="S13-like H2TH domain"/>
    <property type="match status" value="1"/>
</dbReference>
<dbReference type="PROSITE" id="PS00646">
    <property type="entry name" value="RIBOSOMAL_S13_1"/>
    <property type="match status" value="1"/>
</dbReference>
<dbReference type="PROSITE" id="PS50159">
    <property type="entry name" value="RIBOSOMAL_S13_2"/>
    <property type="match status" value="1"/>
</dbReference>
<keyword id="KW-0687">Ribonucleoprotein</keyword>
<keyword id="KW-0689">Ribosomal protein</keyword>
<keyword id="KW-0694">RNA-binding</keyword>
<keyword id="KW-0699">rRNA-binding</keyword>
<keyword id="KW-0820">tRNA-binding</keyword>
<feature type="chain" id="PRO_1000141283" description="Small ribosomal subunit protein uS13">
    <location>
        <begin position="1"/>
        <end position="121"/>
    </location>
</feature>
<feature type="region of interest" description="Disordered" evidence="2">
    <location>
        <begin position="91"/>
        <end position="121"/>
    </location>
</feature>
<feature type="compositionally biased region" description="Basic residues" evidence="2">
    <location>
        <begin position="106"/>
        <end position="121"/>
    </location>
</feature>
<name>RS13_LYSSC</name>
<evidence type="ECO:0000255" key="1">
    <source>
        <dbReference type="HAMAP-Rule" id="MF_01315"/>
    </source>
</evidence>
<evidence type="ECO:0000256" key="2">
    <source>
        <dbReference type="SAM" id="MobiDB-lite"/>
    </source>
</evidence>
<evidence type="ECO:0000305" key="3"/>
<sequence length="121" mass="13787">MARIAGVDIPRDKRVVISLTYIFGIGKTTAQKVLADAGISEDTRVRDLTEDELNKIREQLDSYKLEGDLRRETSLNIKRLMEIGSFRGIRHRRGLPVRGQNTKNNARTRKGPRKTVANKKK</sequence>